<proteinExistence type="evidence at transcript level"/>
<sequence>MNALMRRACCGALFPLSFRLAALSPMKGASNFSCGNVCASPAGCWAPPSGHDTGIKVYNSLTRRKDPLILADPTVATWYSCGPTVYDHAHLGHACSYVRFDIIRRILLKVFGIDTVVVMVVTDIDDKIIKRAKELNISPVALARTYEQDFKQDMTALKVLPPTVYMRVTENIPQIISFIEHIIANGYAYATSQGNVYFDVQSIGERYGKFNDSFSDTASESASQDKRHIRDFALWKTSKPEEPYWASPWGKGRPGWHIECSTIASSVFGKHLDIHTGGIDLAFPHHENEIAQCEAYHQSTQWGNYFLHTGHLHLKGNEEKMSKSLRNYLTVKEFLKSFSPDQFRMFCLRSKYKSAVEYSNGSMHDAVNTLHTISSFVDDAKAYMKGQLICQPVQEALLWQRLNETKVNVKAAFSDDFDTPRAVDAVMDLIHHGNRQLKAVSKESNSPRSSVVYGAMISYIEQFLEILGISLSQNQVAAEDRHSAVLFNVVEEMISFRSKVRNYALAADESPNAIGQEEKQQYKERRRQLLLEREPLLQACDIMRQHLAVYGINVKDRGNTSTWELLDRKEET</sequence>
<reference key="1">
    <citation type="submission" date="2004-06" db="EMBL/GenBank/DDBJ databases">
        <authorList>
            <consortium name="NIH - Xenopus Gene Collection (XGC) project"/>
        </authorList>
    </citation>
    <scope>NUCLEOTIDE SEQUENCE [LARGE SCALE MRNA]</scope>
</reference>
<dbReference type="EC" id="6.1.1.16"/>
<dbReference type="EMBL" id="BC075287">
    <property type="protein sequence ID" value="AAH75287.1"/>
    <property type="molecule type" value="mRNA"/>
</dbReference>
<dbReference type="SMR" id="Q6DJ95"/>
<dbReference type="FunCoup" id="Q6DJ95">
    <property type="interactions" value="546"/>
</dbReference>
<dbReference type="STRING" id="8364.ENSXETP00000019564"/>
<dbReference type="PaxDb" id="8364-ENSXETP00000017999"/>
<dbReference type="eggNOG" id="KOG2007">
    <property type="taxonomic scope" value="Eukaryota"/>
</dbReference>
<dbReference type="InParanoid" id="Q6DJ95"/>
<dbReference type="Proteomes" id="UP000008143">
    <property type="component" value="Unplaced"/>
</dbReference>
<dbReference type="GO" id="GO:0005739">
    <property type="term" value="C:mitochondrion"/>
    <property type="evidence" value="ECO:0000250"/>
    <property type="project" value="UniProtKB"/>
</dbReference>
<dbReference type="GO" id="GO:0005524">
    <property type="term" value="F:ATP binding"/>
    <property type="evidence" value="ECO:0007669"/>
    <property type="project" value="UniProtKB-KW"/>
</dbReference>
<dbReference type="GO" id="GO:0004817">
    <property type="term" value="F:cysteine-tRNA ligase activity"/>
    <property type="evidence" value="ECO:0000250"/>
    <property type="project" value="UniProtKB"/>
</dbReference>
<dbReference type="GO" id="GO:0046872">
    <property type="term" value="F:metal ion binding"/>
    <property type="evidence" value="ECO:0007669"/>
    <property type="project" value="UniProtKB-KW"/>
</dbReference>
<dbReference type="GO" id="GO:0006423">
    <property type="term" value="P:cysteinyl-tRNA aminoacylation"/>
    <property type="evidence" value="ECO:0000250"/>
    <property type="project" value="UniProtKB"/>
</dbReference>
<dbReference type="CDD" id="cd00672">
    <property type="entry name" value="CysRS_core"/>
    <property type="match status" value="1"/>
</dbReference>
<dbReference type="FunFam" id="3.40.50.620:FF:000027">
    <property type="entry name" value="Cysteine--tRNA ligase, cytoplasmic"/>
    <property type="match status" value="1"/>
</dbReference>
<dbReference type="FunFam" id="1.20.120.1910:FF:000010">
    <property type="entry name" value="Cysteinyl-tRNA synthetase 2, mitochondrial"/>
    <property type="match status" value="1"/>
</dbReference>
<dbReference type="Gene3D" id="1.20.120.1910">
    <property type="entry name" value="Cysteine-tRNA ligase, C-terminal anti-codon recognition domain"/>
    <property type="match status" value="1"/>
</dbReference>
<dbReference type="Gene3D" id="3.40.50.620">
    <property type="entry name" value="HUPs"/>
    <property type="match status" value="1"/>
</dbReference>
<dbReference type="HAMAP" id="MF_00041">
    <property type="entry name" value="Cys_tRNA_synth"/>
    <property type="match status" value="1"/>
</dbReference>
<dbReference type="InterPro" id="IPR015803">
    <property type="entry name" value="Cys-tRNA-ligase"/>
</dbReference>
<dbReference type="InterPro" id="IPR015273">
    <property type="entry name" value="Cys-tRNA-synt_Ia_DALR"/>
</dbReference>
<dbReference type="InterPro" id="IPR024909">
    <property type="entry name" value="Cys-tRNA/MSH_ligase"/>
</dbReference>
<dbReference type="InterPro" id="IPR014729">
    <property type="entry name" value="Rossmann-like_a/b/a_fold"/>
</dbReference>
<dbReference type="InterPro" id="IPR032678">
    <property type="entry name" value="tRNA-synt_1_cat_dom"/>
</dbReference>
<dbReference type="InterPro" id="IPR009080">
    <property type="entry name" value="tRNAsynth_Ia_anticodon-bd"/>
</dbReference>
<dbReference type="NCBIfam" id="TIGR00435">
    <property type="entry name" value="cysS"/>
    <property type="match status" value="1"/>
</dbReference>
<dbReference type="PANTHER" id="PTHR10890:SF27">
    <property type="entry name" value="CYSTEINE--TRNA LIGASE, MITOCHONDRIAL-RELATED"/>
    <property type="match status" value="1"/>
</dbReference>
<dbReference type="PANTHER" id="PTHR10890">
    <property type="entry name" value="CYSTEINYL-TRNA SYNTHETASE"/>
    <property type="match status" value="1"/>
</dbReference>
<dbReference type="Pfam" id="PF09190">
    <property type="entry name" value="DALR_2"/>
    <property type="match status" value="1"/>
</dbReference>
<dbReference type="Pfam" id="PF01406">
    <property type="entry name" value="tRNA-synt_1e"/>
    <property type="match status" value="1"/>
</dbReference>
<dbReference type="PRINTS" id="PR00983">
    <property type="entry name" value="TRNASYNTHCYS"/>
</dbReference>
<dbReference type="SUPFAM" id="SSF47323">
    <property type="entry name" value="Anticodon-binding domain of a subclass of class I aminoacyl-tRNA synthetases"/>
    <property type="match status" value="1"/>
</dbReference>
<dbReference type="SUPFAM" id="SSF52374">
    <property type="entry name" value="Nucleotidylyl transferase"/>
    <property type="match status" value="1"/>
</dbReference>
<protein>
    <recommendedName>
        <fullName>Probable cysteine--tRNA ligase, mitochondrial</fullName>
        <ecNumber>6.1.1.16</ecNumber>
    </recommendedName>
    <alternativeName>
        <fullName>Cysteinyl-tRNA synthetase</fullName>
        <shortName>CysRS</shortName>
    </alternativeName>
</protein>
<accession>Q6DJ95</accession>
<name>SYCM_XENTR</name>
<organism>
    <name type="scientific">Xenopus tropicalis</name>
    <name type="common">Western clawed frog</name>
    <name type="synonym">Silurana tropicalis</name>
    <dbReference type="NCBI Taxonomy" id="8364"/>
    <lineage>
        <taxon>Eukaryota</taxon>
        <taxon>Metazoa</taxon>
        <taxon>Chordata</taxon>
        <taxon>Craniata</taxon>
        <taxon>Vertebrata</taxon>
        <taxon>Euteleostomi</taxon>
        <taxon>Amphibia</taxon>
        <taxon>Batrachia</taxon>
        <taxon>Anura</taxon>
        <taxon>Pipoidea</taxon>
        <taxon>Pipidae</taxon>
        <taxon>Xenopodinae</taxon>
        <taxon>Xenopus</taxon>
        <taxon>Silurana</taxon>
    </lineage>
</organism>
<feature type="transit peptide" description="Mitochondrion" evidence="4">
    <location>
        <begin position="1"/>
        <end status="unknown"/>
    </location>
</feature>
<feature type="chain" id="PRO_0000250743" description="Probable cysteine--tRNA ligase, mitochondrial">
    <location>
        <begin status="unknown"/>
        <end position="572"/>
    </location>
</feature>
<feature type="short sequence motif" description="'HIGH' region">
    <location>
        <begin position="83"/>
        <end position="93"/>
    </location>
</feature>
<feature type="short sequence motif" description="'KIIK' region">
    <location>
        <begin position="127"/>
        <end position="130"/>
    </location>
</feature>
<feature type="short sequence motif" description="'KMSKS' region">
    <location>
        <begin position="320"/>
        <end position="324"/>
    </location>
</feature>
<feature type="binding site" evidence="2">
    <location>
        <position position="81"/>
    </location>
    <ligand>
        <name>Zn(2+)</name>
        <dbReference type="ChEBI" id="CHEBI:29105"/>
    </ligand>
</feature>
<feature type="binding site" evidence="2">
    <location>
        <position position="82"/>
    </location>
    <ligand>
        <name>L-cysteine</name>
        <dbReference type="ChEBI" id="CHEBI:35235"/>
    </ligand>
</feature>
<feature type="binding site" evidence="2">
    <location>
        <position position="122"/>
    </location>
    <ligand>
        <name>L-cysteine</name>
        <dbReference type="ChEBI" id="CHEBI:35235"/>
    </ligand>
</feature>
<feature type="binding site" evidence="2">
    <location>
        <position position="260"/>
    </location>
    <ligand>
        <name>Zn(2+)</name>
        <dbReference type="ChEBI" id="CHEBI:29105"/>
    </ligand>
</feature>
<feature type="binding site" evidence="2">
    <location>
        <position position="285"/>
    </location>
    <ligand>
        <name>L-cysteine</name>
        <dbReference type="ChEBI" id="CHEBI:35235"/>
    </ligand>
</feature>
<feature type="binding site" evidence="2">
    <location>
        <position position="285"/>
    </location>
    <ligand>
        <name>Zn(2+)</name>
        <dbReference type="ChEBI" id="CHEBI:29105"/>
    </ligand>
</feature>
<feature type="binding site" evidence="2">
    <location>
        <position position="289"/>
    </location>
    <ligand>
        <name>Zn(2+)</name>
        <dbReference type="ChEBI" id="CHEBI:29105"/>
    </ligand>
</feature>
<feature type="binding site" evidence="1">
    <location>
        <position position="323"/>
    </location>
    <ligand>
        <name>ATP</name>
        <dbReference type="ChEBI" id="CHEBI:30616"/>
    </ligand>
</feature>
<gene>
    <name type="primary">cars2</name>
</gene>
<keyword id="KW-0030">Aminoacyl-tRNA synthetase</keyword>
<keyword id="KW-0067">ATP-binding</keyword>
<keyword id="KW-0436">Ligase</keyword>
<keyword id="KW-0479">Metal-binding</keyword>
<keyword id="KW-0496">Mitochondrion</keyword>
<keyword id="KW-0547">Nucleotide-binding</keyword>
<keyword id="KW-0648">Protein biosynthesis</keyword>
<keyword id="KW-1185">Reference proteome</keyword>
<keyword id="KW-0809">Transit peptide</keyword>
<keyword id="KW-0862">Zinc</keyword>
<comment type="function">
    <text evidence="3">Mitochondrial cysteine-specific aminoacyl-tRNA synthetase that catalyzes the ATP-dependent ligation of cysteine to tRNA(Cys).</text>
</comment>
<comment type="function">
    <text evidence="3">In addition to its role as an aminoacyl-tRNA synthetase, has also cysteine persulfide synthase activity. Produces reactive persulfide species such as cysteine persulfide (CysSSH) from substrate cysteine and mediate direct incorporation of CysSSH into proteins during translations, resulting in protein persulfides and polysulfides. CysSSHs behave as potent antioxidants and cellular protectants.</text>
</comment>
<comment type="catalytic activity">
    <reaction evidence="3">
        <text>tRNA(Cys) + L-cysteine + ATP = L-cysteinyl-tRNA(Cys) + AMP + diphosphate</text>
        <dbReference type="Rhea" id="RHEA:17773"/>
        <dbReference type="Rhea" id="RHEA-COMP:9661"/>
        <dbReference type="Rhea" id="RHEA-COMP:9679"/>
        <dbReference type="ChEBI" id="CHEBI:30616"/>
        <dbReference type="ChEBI" id="CHEBI:33019"/>
        <dbReference type="ChEBI" id="CHEBI:35235"/>
        <dbReference type="ChEBI" id="CHEBI:78442"/>
        <dbReference type="ChEBI" id="CHEBI:78517"/>
        <dbReference type="ChEBI" id="CHEBI:456215"/>
        <dbReference type="EC" id="6.1.1.16"/>
    </reaction>
    <physiologicalReaction direction="right-to-left" evidence="3">
        <dbReference type="Rhea" id="RHEA:17775"/>
    </physiologicalReaction>
</comment>
<comment type="catalytic activity">
    <reaction evidence="3">
        <text>2 L-cysteine = S-sulfanyl-L-cysteine + L-alanine</text>
        <dbReference type="Rhea" id="RHEA:78543"/>
        <dbReference type="ChEBI" id="CHEBI:35235"/>
        <dbReference type="ChEBI" id="CHEBI:57972"/>
        <dbReference type="ChEBI" id="CHEBI:58591"/>
    </reaction>
    <physiologicalReaction direction="left-to-right" evidence="3">
        <dbReference type="Rhea" id="RHEA:78544"/>
    </physiologicalReaction>
</comment>
<comment type="catalytic activity">
    <reaction evidence="3">
        <text>S-sulfanyl-L-cysteine + L-cysteine = S-disulfanyl-L-cysteine + L-alanine</text>
        <dbReference type="Rhea" id="RHEA:78627"/>
        <dbReference type="ChEBI" id="CHEBI:35235"/>
        <dbReference type="ChEBI" id="CHEBI:57972"/>
        <dbReference type="ChEBI" id="CHEBI:58591"/>
        <dbReference type="ChEBI" id="CHEBI:229465"/>
    </reaction>
    <physiologicalReaction direction="left-to-right" evidence="3">
        <dbReference type="Rhea" id="RHEA:78628"/>
    </physiologicalReaction>
</comment>
<comment type="catalytic activity">
    <reaction evidence="3">
        <text>S-sulfanyl-L-cysteine + tRNA(Cys) + ATP = (S)-sulfanyl-L-cysteinyl-tRNA(Cys) + AMP + diphosphate</text>
        <dbReference type="Rhea" id="RHEA:78647"/>
        <dbReference type="Rhea" id="RHEA-COMP:9661"/>
        <dbReference type="Rhea" id="RHEA-COMP:19119"/>
        <dbReference type="ChEBI" id="CHEBI:30616"/>
        <dbReference type="ChEBI" id="CHEBI:33019"/>
        <dbReference type="ChEBI" id="CHEBI:58591"/>
        <dbReference type="ChEBI" id="CHEBI:78442"/>
        <dbReference type="ChEBI" id="CHEBI:229520"/>
        <dbReference type="ChEBI" id="CHEBI:456215"/>
    </reaction>
    <physiologicalReaction direction="left-to-right" evidence="3">
        <dbReference type="Rhea" id="RHEA:78648"/>
    </physiologicalReaction>
</comment>
<comment type="catalytic activity">
    <reaction evidence="3">
        <text>S-disulfanyl-L-cysteine + tRNA(Cys) + ATP = (S)-disulfanyl-L-cysteinyl-tRNA(Cys) + AMP + diphosphate</text>
        <dbReference type="Rhea" id="RHEA:78651"/>
        <dbReference type="Rhea" id="RHEA-COMP:9661"/>
        <dbReference type="Rhea" id="RHEA-COMP:19120"/>
        <dbReference type="ChEBI" id="CHEBI:30616"/>
        <dbReference type="ChEBI" id="CHEBI:33019"/>
        <dbReference type="ChEBI" id="CHEBI:78442"/>
        <dbReference type="ChEBI" id="CHEBI:229465"/>
        <dbReference type="ChEBI" id="CHEBI:229521"/>
        <dbReference type="ChEBI" id="CHEBI:456215"/>
    </reaction>
    <physiologicalReaction direction="left-to-right" evidence="3">
        <dbReference type="Rhea" id="RHEA:78652"/>
    </physiologicalReaction>
</comment>
<comment type="cofactor">
    <cofactor evidence="2">
        <name>Zn(2+)</name>
        <dbReference type="ChEBI" id="CHEBI:29105"/>
    </cofactor>
    <text evidence="2">Binds 1 zinc ion per subunit.</text>
</comment>
<comment type="subcellular location">
    <subcellularLocation>
        <location evidence="3">Mitochondrion</location>
    </subcellularLocation>
</comment>
<comment type="domain">
    <text evidence="3">'KIIK' region and 'KMSKS' region are required for cysteine persulfide synthase activity.</text>
</comment>
<comment type="similarity">
    <text evidence="5">Belongs to the class-I aminoacyl-tRNA synthetase family.</text>
</comment>
<evidence type="ECO:0000250" key="1"/>
<evidence type="ECO:0000250" key="2">
    <source>
        <dbReference type="UniProtKB" id="P21888"/>
    </source>
</evidence>
<evidence type="ECO:0000250" key="3">
    <source>
        <dbReference type="UniProtKB" id="Q9HA77"/>
    </source>
</evidence>
<evidence type="ECO:0000255" key="4"/>
<evidence type="ECO:0000305" key="5"/>